<accession>A2T346</accession>
<comment type="function">
    <text evidence="2">Component of the cytochrome b6-f complex, which mediates electron transfer between photosystem II (PSII) and photosystem I (PSI), cyclic electron flow around PSI, and state transitions.</text>
</comment>
<comment type="cofactor">
    <cofactor evidence="2">
        <name>heme</name>
        <dbReference type="ChEBI" id="CHEBI:30413"/>
    </cofactor>
    <text evidence="2">Binds 1 heme group covalently.</text>
</comment>
<comment type="subunit">
    <text evidence="1">The 4 large subunits of the cytochrome b6-f complex are cytochrome b6, subunit IV (17 kDa polypeptide, petD), cytochrome f and the Rieske protein, while the 4 small subunits are PetG, PetL, PetM and PetN. The complex functions as a dimer (By similarity).</text>
</comment>
<comment type="subcellular location">
    <subcellularLocation>
        <location evidence="2">Plastid</location>
        <location evidence="2">Chloroplast thylakoid membrane</location>
        <topology evidence="2">Single-pass membrane protein</topology>
    </subcellularLocation>
</comment>
<comment type="similarity">
    <text evidence="2">Belongs to the cytochrome f family.</text>
</comment>
<geneLocation type="chloroplast"/>
<name>CYF_ANGEV</name>
<sequence>MQNKNNYNWLKEWVIRSFLLLTLLTWPSVSNAYPIFAQQGYENPREATGRIVCANCHLAKKPVDIEVPQSVLPDTVFEAIVKIPYDMQVKQVLANGKKGGLNVGAVPILPQGFELAPSDRIPTEIKEKIGNLSFQNYSPDKKNIIIVGPVPGKKYSEIVFPILSPDPASNKESNFLKYPIYVGGNRGRGQIYPDGSRSNNTVYNASATGKVIKIFRKEKKGGYEITIEKTSDGRQVVDIVPPGPELIISEGEFLKVDQPLTNNPNVGGFGQGDAEIVLQDPLRIQGLLLFFASVVLAQIFLVLKKKQFEKVQLAEMNF</sequence>
<organism>
    <name type="scientific">Angiopteris evecta</name>
    <name type="common">Mule's foot fern</name>
    <name type="synonym">Polypodium evectum</name>
    <dbReference type="NCBI Taxonomy" id="13825"/>
    <lineage>
        <taxon>Eukaryota</taxon>
        <taxon>Viridiplantae</taxon>
        <taxon>Streptophyta</taxon>
        <taxon>Embryophyta</taxon>
        <taxon>Tracheophyta</taxon>
        <taxon>Polypodiopsida</taxon>
        <taxon>Marattiidae</taxon>
        <taxon>Marattiales</taxon>
        <taxon>Marattiaceae</taxon>
        <taxon>Angiopteris</taxon>
    </lineage>
</organism>
<gene>
    <name evidence="2" type="primary">petA</name>
</gene>
<reference key="1">
    <citation type="journal article" date="2007" name="Am. Fern J.">
        <title>The complete plastid genome sequence of Angiopteris evecta (G. Forst.) Hoffm. (Marattiaceae).</title>
        <authorList>
            <person name="Roper J.M."/>
            <person name="Hansen S.K."/>
            <person name="Wolf P.G."/>
            <person name="Karol K.G."/>
            <person name="Mandoli D.F."/>
            <person name="Everett K.D.E."/>
            <person name="Kuehl J.V."/>
            <person name="Boore J.L."/>
        </authorList>
    </citation>
    <scope>NUCLEOTIDE SEQUENCE [LARGE SCALE GENOMIC DNA]</scope>
</reference>
<dbReference type="EMBL" id="DQ821119">
    <property type="protein sequence ID" value="ABG79613.1"/>
    <property type="molecule type" value="Genomic_DNA"/>
</dbReference>
<dbReference type="RefSeq" id="YP_001023714.1">
    <property type="nucleotide sequence ID" value="NC_008829.1"/>
</dbReference>
<dbReference type="SMR" id="A2T346"/>
<dbReference type="GeneID" id="4788257"/>
<dbReference type="GO" id="GO:0009535">
    <property type="term" value="C:chloroplast thylakoid membrane"/>
    <property type="evidence" value="ECO:0007669"/>
    <property type="project" value="UniProtKB-SubCell"/>
</dbReference>
<dbReference type="GO" id="GO:0009055">
    <property type="term" value="F:electron transfer activity"/>
    <property type="evidence" value="ECO:0007669"/>
    <property type="project" value="UniProtKB-UniRule"/>
</dbReference>
<dbReference type="GO" id="GO:0020037">
    <property type="term" value="F:heme binding"/>
    <property type="evidence" value="ECO:0007669"/>
    <property type="project" value="InterPro"/>
</dbReference>
<dbReference type="GO" id="GO:0005506">
    <property type="term" value="F:iron ion binding"/>
    <property type="evidence" value="ECO:0007669"/>
    <property type="project" value="InterPro"/>
</dbReference>
<dbReference type="GO" id="GO:0015979">
    <property type="term" value="P:photosynthesis"/>
    <property type="evidence" value="ECO:0007669"/>
    <property type="project" value="UniProtKB-UniRule"/>
</dbReference>
<dbReference type="FunFam" id="1.20.5.700:FF:000001">
    <property type="entry name" value="Cytochrome f"/>
    <property type="match status" value="1"/>
</dbReference>
<dbReference type="FunFam" id="2.40.50.100:FF:000007">
    <property type="entry name" value="Cytochrome f"/>
    <property type="match status" value="1"/>
</dbReference>
<dbReference type="FunFam" id="2.60.40.830:FF:000001">
    <property type="entry name" value="Cytochrome f"/>
    <property type="match status" value="1"/>
</dbReference>
<dbReference type="Gene3D" id="2.40.50.100">
    <property type="match status" value="1"/>
</dbReference>
<dbReference type="Gene3D" id="2.60.40.830">
    <property type="entry name" value="Cytochrome f large domain"/>
    <property type="match status" value="1"/>
</dbReference>
<dbReference type="Gene3D" id="1.20.5.700">
    <property type="entry name" value="Single helix bin"/>
    <property type="match status" value="1"/>
</dbReference>
<dbReference type="HAMAP" id="MF_00610">
    <property type="entry name" value="Cytb6_f_cytF"/>
    <property type="match status" value="1"/>
</dbReference>
<dbReference type="InterPro" id="IPR024058">
    <property type="entry name" value="Cyt-f_TM"/>
</dbReference>
<dbReference type="InterPro" id="IPR002325">
    <property type="entry name" value="Cyt_f"/>
</dbReference>
<dbReference type="InterPro" id="IPR024094">
    <property type="entry name" value="Cyt_f_lg_dom"/>
</dbReference>
<dbReference type="InterPro" id="IPR036826">
    <property type="entry name" value="Cyt_f_lg_dom_sf"/>
</dbReference>
<dbReference type="InterPro" id="IPR011054">
    <property type="entry name" value="Rudment_hybrid_motif"/>
</dbReference>
<dbReference type="PANTHER" id="PTHR33288">
    <property type="match status" value="1"/>
</dbReference>
<dbReference type="PANTHER" id="PTHR33288:SF10">
    <property type="entry name" value="CYTOCHROME F"/>
    <property type="match status" value="1"/>
</dbReference>
<dbReference type="Pfam" id="PF01333">
    <property type="entry name" value="Apocytochr_F_C"/>
    <property type="match status" value="1"/>
</dbReference>
<dbReference type="Pfam" id="PF16639">
    <property type="entry name" value="Apocytochr_F_N"/>
    <property type="match status" value="1"/>
</dbReference>
<dbReference type="PRINTS" id="PR00610">
    <property type="entry name" value="CYTOCHROMEF"/>
</dbReference>
<dbReference type="SUPFAM" id="SSF103431">
    <property type="entry name" value="Cytochrome f subunit of the cytochrome b6f complex, transmembrane anchor"/>
    <property type="match status" value="1"/>
</dbReference>
<dbReference type="SUPFAM" id="SSF49441">
    <property type="entry name" value="Cytochrome f, large domain"/>
    <property type="match status" value="1"/>
</dbReference>
<dbReference type="SUPFAM" id="SSF51246">
    <property type="entry name" value="Rudiment single hybrid motif"/>
    <property type="match status" value="1"/>
</dbReference>
<dbReference type="PROSITE" id="PS51010">
    <property type="entry name" value="CYTF"/>
    <property type="match status" value="1"/>
</dbReference>
<evidence type="ECO:0000250" key="1"/>
<evidence type="ECO:0000255" key="2">
    <source>
        <dbReference type="HAMAP-Rule" id="MF_00610"/>
    </source>
</evidence>
<protein>
    <recommendedName>
        <fullName evidence="2">Cytochrome f</fullName>
    </recommendedName>
</protein>
<feature type="signal peptide" evidence="2">
    <location>
        <begin position="1"/>
        <end position="32"/>
    </location>
</feature>
<feature type="chain" id="PRO_0000342046" description="Cytochrome f">
    <location>
        <begin position="33"/>
        <end position="318"/>
    </location>
</feature>
<feature type="transmembrane region" description="Helical" evidence="2">
    <location>
        <begin position="284"/>
        <end position="304"/>
    </location>
</feature>
<feature type="binding site" description="axial binding residue" evidence="2">
    <location>
        <position position="33"/>
    </location>
    <ligand>
        <name>heme</name>
        <dbReference type="ChEBI" id="CHEBI:30413"/>
    </ligand>
    <ligandPart>
        <name>Fe</name>
        <dbReference type="ChEBI" id="CHEBI:18248"/>
    </ligandPart>
</feature>
<feature type="binding site" description="covalent" evidence="2">
    <location>
        <position position="53"/>
    </location>
    <ligand>
        <name>heme</name>
        <dbReference type="ChEBI" id="CHEBI:30413"/>
    </ligand>
</feature>
<feature type="binding site" description="covalent" evidence="2">
    <location>
        <position position="56"/>
    </location>
    <ligand>
        <name>heme</name>
        <dbReference type="ChEBI" id="CHEBI:30413"/>
    </ligand>
</feature>
<feature type="binding site" description="axial binding residue" evidence="2">
    <location>
        <position position="57"/>
    </location>
    <ligand>
        <name>heme</name>
        <dbReference type="ChEBI" id="CHEBI:30413"/>
    </ligand>
    <ligandPart>
        <name>Fe</name>
        <dbReference type="ChEBI" id="CHEBI:18248"/>
    </ligandPart>
</feature>
<proteinExistence type="inferred from homology"/>
<keyword id="KW-0150">Chloroplast</keyword>
<keyword id="KW-0249">Electron transport</keyword>
<keyword id="KW-0349">Heme</keyword>
<keyword id="KW-0408">Iron</keyword>
<keyword id="KW-0472">Membrane</keyword>
<keyword id="KW-0479">Metal-binding</keyword>
<keyword id="KW-0602">Photosynthesis</keyword>
<keyword id="KW-0934">Plastid</keyword>
<keyword id="KW-0732">Signal</keyword>
<keyword id="KW-0793">Thylakoid</keyword>
<keyword id="KW-0812">Transmembrane</keyword>
<keyword id="KW-1133">Transmembrane helix</keyword>
<keyword id="KW-0813">Transport</keyword>